<feature type="chain" id="PRO_0000093146" description="ABC transporter ATP-binding protein YtrE">
    <location>
        <begin position="1"/>
        <end position="231"/>
    </location>
</feature>
<feature type="domain" description="ABC transporter" evidence="1">
    <location>
        <begin position="4"/>
        <end position="231"/>
    </location>
</feature>
<feature type="binding site" evidence="1">
    <location>
        <begin position="42"/>
        <end position="49"/>
    </location>
    <ligand>
        <name>ATP</name>
        <dbReference type="ChEBI" id="CHEBI:30616"/>
    </ligand>
</feature>
<reference key="1">
    <citation type="journal article" date="1997" name="Microbiology">
        <title>Sequencing and functional annotation of the Bacillus subtilis genes in the 200 kb rrnB-dnaB region.</title>
        <authorList>
            <person name="Lapidus A."/>
            <person name="Galleron N."/>
            <person name="Sorokin A."/>
            <person name="Ehrlich S.D."/>
        </authorList>
    </citation>
    <scope>NUCLEOTIDE SEQUENCE [GENOMIC DNA]</scope>
    <source>
        <strain>168</strain>
    </source>
</reference>
<reference key="2">
    <citation type="journal article" date="1997" name="Nature">
        <title>The complete genome sequence of the Gram-positive bacterium Bacillus subtilis.</title>
        <authorList>
            <person name="Kunst F."/>
            <person name="Ogasawara N."/>
            <person name="Moszer I."/>
            <person name="Albertini A.M."/>
            <person name="Alloni G."/>
            <person name="Azevedo V."/>
            <person name="Bertero M.G."/>
            <person name="Bessieres P."/>
            <person name="Bolotin A."/>
            <person name="Borchert S."/>
            <person name="Borriss R."/>
            <person name="Boursier L."/>
            <person name="Brans A."/>
            <person name="Braun M."/>
            <person name="Brignell S.C."/>
            <person name="Bron S."/>
            <person name="Brouillet S."/>
            <person name="Bruschi C.V."/>
            <person name="Caldwell B."/>
            <person name="Capuano V."/>
            <person name="Carter N.M."/>
            <person name="Choi S.-K."/>
            <person name="Codani J.-J."/>
            <person name="Connerton I.F."/>
            <person name="Cummings N.J."/>
            <person name="Daniel R.A."/>
            <person name="Denizot F."/>
            <person name="Devine K.M."/>
            <person name="Duesterhoeft A."/>
            <person name="Ehrlich S.D."/>
            <person name="Emmerson P.T."/>
            <person name="Entian K.-D."/>
            <person name="Errington J."/>
            <person name="Fabret C."/>
            <person name="Ferrari E."/>
            <person name="Foulger D."/>
            <person name="Fritz C."/>
            <person name="Fujita M."/>
            <person name="Fujita Y."/>
            <person name="Fuma S."/>
            <person name="Galizzi A."/>
            <person name="Galleron N."/>
            <person name="Ghim S.-Y."/>
            <person name="Glaser P."/>
            <person name="Goffeau A."/>
            <person name="Golightly E.J."/>
            <person name="Grandi G."/>
            <person name="Guiseppi G."/>
            <person name="Guy B.J."/>
            <person name="Haga K."/>
            <person name="Haiech J."/>
            <person name="Harwood C.R."/>
            <person name="Henaut A."/>
            <person name="Hilbert H."/>
            <person name="Holsappel S."/>
            <person name="Hosono S."/>
            <person name="Hullo M.-F."/>
            <person name="Itaya M."/>
            <person name="Jones L.-M."/>
            <person name="Joris B."/>
            <person name="Karamata D."/>
            <person name="Kasahara Y."/>
            <person name="Klaerr-Blanchard M."/>
            <person name="Klein C."/>
            <person name="Kobayashi Y."/>
            <person name="Koetter P."/>
            <person name="Koningstein G."/>
            <person name="Krogh S."/>
            <person name="Kumano M."/>
            <person name="Kurita K."/>
            <person name="Lapidus A."/>
            <person name="Lardinois S."/>
            <person name="Lauber J."/>
            <person name="Lazarevic V."/>
            <person name="Lee S.-M."/>
            <person name="Levine A."/>
            <person name="Liu H."/>
            <person name="Masuda S."/>
            <person name="Mauel C."/>
            <person name="Medigue C."/>
            <person name="Medina N."/>
            <person name="Mellado R.P."/>
            <person name="Mizuno M."/>
            <person name="Moestl D."/>
            <person name="Nakai S."/>
            <person name="Noback M."/>
            <person name="Noone D."/>
            <person name="O'Reilly M."/>
            <person name="Ogawa K."/>
            <person name="Ogiwara A."/>
            <person name="Oudega B."/>
            <person name="Park S.-H."/>
            <person name="Parro V."/>
            <person name="Pohl T.M."/>
            <person name="Portetelle D."/>
            <person name="Porwollik S."/>
            <person name="Prescott A.M."/>
            <person name="Presecan E."/>
            <person name="Pujic P."/>
            <person name="Purnelle B."/>
            <person name="Rapoport G."/>
            <person name="Rey M."/>
            <person name="Reynolds S."/>
            <person name="Rieger M."/>
            <person name="Rivolta C."/>
            <person name="Rocha E."/>
            <person name="Roche B."/>
            <person name="Rose M."/>
            <person name="Sadaie Y."/>
            <person name="Sato T."/>
            <person name="Scanlan E."/>
            <person name="Schleich S."/>
            <person name="Schroeter R."/>
            <person name="Scoffone F."/>
            <person name="Sekiguchi J."/>
            <person name="Sekowska A."/>
            <person name="Seror S.J."/>
            <person name="Serror P."/>
            <person name="Shin B.-S."/>
            <person name="Soldo B."/>
            <person name="Sorokin A."/>
            <person name="Tacconi E."/>
            <person name="Takagi T."/>
            <person name="Takahashi H."/>
            <person name="Takemaru K."/>
            <person name="Takeuchi M."/>
            <person name="Tamakoshi A."/>
            <person name="Tanaka T."/>
            <person name="Terpstra P."/>
            <person name="Tognoni A."/>
            <person name="Tosato V."/>
            <person name="Uchiyama S."/>
            <person name="Vandenbol M."/>
            <person name="Vannier F."/>
            <person name="Vassarotti A."/>
            <person name="Viari A."/>
            <person name="Wambutt R."/>
            <person name="Wedler E."/>
            <person name="Wedler H."/>
            <person name="Weitzenegger T."/>
            <person name="Winters P."/>
            <person name="Wipat A."/>
            <person name="Yamamoto H."/>
            <person name="Yamane K."/>
            <person name="Yasumoto K."/>
            <person name="Yata K."/>
            <person name="Yoshida K."/>
            <person name="Yoshikawa H.-F."/>
            <person name="Zumstein E."/>
            <person name="Yoshikawa H."/>
            <person name="Danchin A."/>
        </authorList>
    </citation>
    <scope>NUCLEOTIDE SEQUENCE [LARGE SCALE GENOMIC DNA]</scope>
    <source>
        <strain>168</strain>
    </source>
</reference>
<reference key="3">
    <citation type="journal article" date="2000" name="J. Bacteriol.">
        <title>An operon for a putative ATP-binding cassette transport system involved in acetoin utilization of Bacillus subtilis.</title>
        <authorList>
            <person name="Yoshida K."/>
            <person name="Fujita Y."/>
            <person name="Ehrlich S.D."/>
        </authorList>
    </citation>
    <scope>FUNCTION</scope>
    <scope>DEVELOPMENTAL STAGE</scope>
    <scope>INDUCTION</scope>
</reference>
<gene>
    <name type="primary">ytrE</name>
    <name type="ordered locus">BSU30420</name>
</gene>
<protein>
    <recommendedName>
        <fullName>ABC transporter ATP-binding protein YtrE</fullName>
    </recommendedName>
</protein>
<sequence length="231" mass="25460">MIDVQHIDHSFTIGKKGRENEVPVLKDVSLSVAKGEIACIVGRSGSGKSTLLNLISGYISPTKGRIVINGTDVTGFNEKEWAQFRLDHFGFIFQSFQLIPGLTTYENVEMPLALKGIKPSERKQKVQDMLKRVGLENHAAHYPNELSGGQQQRVSIARALILNPSIILADEPTGSLDSETEHEVLELIQQLNRERGITFVIITHDDEVASIGHSKFQLHDGVLKGGITVEV</sequence>
<comment type="function">
    <text evidence="2">Part of the ABC transporter complex YtrBCDEF that plays a role in acetoin utilization during stationary phase and sporulation.</text>
</comment>
<comment type="subunit">
    <text evidence="3">The complex is composed of 2 ATP-binding proteins (YtrB and YtrE), 2 transmembrane proteins (YtrC and YtrD) and a solute-binding protein (YtrF).</text>
</comment>
<comment type="subcellular location">
    <subcellularLocation>
        <location evidence="3">Cell membrane</location>
        <topology evidence="3">Peripheral membrane protein</topology>
        <orientation evidence="3">Cytoplasmic side</orientation>
    </subcellularLocation>
</comment>
<comment type="developmental stage">
    <text evidence="2">Expressed early in the stationary phase.</text>
</comment>
<comment type="induction">
    <text evidence="2">Negatively regulated by YtrA.</text>
</comment>
<comment type="similarity">
    <text evidence="3">Belongs to the ABC transporter superfamily.</text>
</comment>
<keyword id="KW-0067">ATP-binding</keyword>
<keyword id="KW-1003">Cell membrane</keyword>
<keyword id="KW-0472">Membrane</keyword>
<keyword id="KW-0547">Nucleotide-binding</keyword>
<keyword id="KW-1185">Reference proteome</keyword>
<keyword id="KW-0813">Transport</keyword>
<dbReference type="EMBL" id="AF008220">
    <property type="protein sequence ID" value="AAC00251.1"/>
    <property type="molecule type" value="Genomic_DNA"/>
</dbReference>
<dbReference type="EMBL" id="AL009126">
    <property type="protein sequence ID" value="CAB15020.1"/>
    <property type="molecule type" value="Genomic_DNA"/>
</dbReference>
<dbReference type="PIR" id="C70000">
    <property type="entry name" value="C70000"/>
</dbReference>
<dbReference type="RefSeq" id="NP_390920.1">
    <property type="nucleotide sequence ID" value="NC_000964.3"/>
</dbReference>
<dbReference type="RefSeq" id="WP_003229129.1">
    <property type="nucleotide sequence ID" value="NZ_OZ025638.1"/>
</dbReference>
<dbReference type="SMR" id="O34392"/>
<dbReference type="FunCoup" id="O34392">
    <property type="interactions" value="184"/>
</dbReference>
<dbReference type="STRING" id="224308.BSU30420"/>
<dbReference type="TCDB" id="3.A.1.122.19">
    <property type="family name" value="the atp-binding cassette (abc) superfamily"/>
</dbReference>
<dbReference type="PaxDb" id="224308-BSU30420"/>
<dbReference type="EnsemblBacteria" id="CAB15020">
    <property type="protein sequence ID" value="CAB15020"/>
    <property type="gene ID" value="BSU_30420"/>
</dbReference>
<dbReference type="GeneID" id="86872451"/>
<dbReference type="GeneID" id="937245"/>
<dbReference type="KEGG" id="bsu:BSU30420"/>
<dbReference type="PATRIC" id="fig|224308.179.peg.3299"/>
<dbReference type="eggNOG" id="COG1136">
    <property type="taxonomic scope" value="Bacteria"/>
</dbReference>
<dbReference type="InParanoid" id="O34392"/>
<dbReference type="OrthoDB" id="9791546at2"/>
<dbReference type="PhylomeDB" id="O34392"/>
<dbReference type="BioCyc" id="BSUB:BSU30420-MONOMER"/>
<dbReference type="Proteomes" id="UP000001570">
    <property type="component" value="Chromosome"/>
</dbReference>
<dbReference type="GO" id="GO:0005886">
    <property type="term" value="C:plasma membrane"/>
    <property type="evidence" value="ECO:0000318"/>
    <property type="project" value="GO_Central"/>
</dbReference>
<dbReference type="GO" id="GO:0005524">
    <property type="term" value="F:ATP binding"/>
    <property type="evidence" value="ECO:0007669"/>
    <property type="project" value="UniProtKB-KW"/>
</dbReference>
<dbReference type="GO" id="GO:0016887">
    <property type="term" value="F:ATP hydrolysis activity"/>
    <property type="evidence" value="ECO:0007669"/>
    <property type="project" value="InterPro"/>
</dbReference>
<dbReference type="GO" id="GO:0022857">
    <property type="term" value="F:transmembrane transporter activity"/>
    <property type="evidence" value="ECO:0000318"/>
    <property type="project" value="GO_Central"/>
</dbReference>
<dbReference type="GO" id="GO:0055085">
    <property type="term" value="P:transmembrane transport"/>
    <property type="evidence" value="ECO:0000318"/>
    <property type="project" value="GO_Central"/>
</dbReference>
<dbReference type="CDD" id="cd03255">
    <property type="entry name" value="ABC_MJ0796_LolCDE_FtsE"/>
    <property type="match status" value="1"/>
</dbReference>
<dbReference type="FunFam" id="3.40.50.300:FF:000032">
    <property type="entry name" value="Export ABC transporter ATP-binding protein"/>
    <property type="match status" value="1"/>
</dbReference>
<dbReference type="Gene3D" id="3.40.50.300">
    <property type="entry name" value="P-loop containing nucleotide triphosphate hydrolases"/>
    <property type="match status" value="1"/>
</dbReference>
<dbReference type="InterPro" id="IPR003593">
    <property type="entry name" value="AAA+_ATPase"/>
</dbReference>
<dbReference type="InterPro" id="IPR003439">
    <property type="entry name" value="ABC_transporter-like_ATP-bd"/>
</dbReference>
<dbReference type="InterPro" id="IPR017871">
    <property type="entry name" value="ABC_transporter-like_CS"/>
</dbReference>
<dbReference type="InterPro" id="IPR015854">
    <property type="entry name" value="ABC_transpr_LolD-like"/>
</dbReference>
<dbReference type="InterPro" id="IPR017911">
    <property type="entry name" value="MacB-like_ATP-bd"/>
</dbReference>
<dbReference type="InterPro" id="IPR027417">
    <property type="entry name" value="P-loop_NTPase"/>
</dbReference>
<dbReference type="PANTHER" id="PTHR24220:SF648">
    <property type="entry name" value="ABC TRANSPORTER ATP-BINDING PROTEIN YTRE"/>
    <property type="match status" value="1"/>
</dbReference>
<dbReference type="PANTHER" id="PTHR24220">
    <property type="entry name" value="IMPORT ATP-BINDING PROTEIN"/>
    <property type="match status" value="1"/>
</dbReference>
<dbReference type="Pfam" id="PF00005">
    <property type="entry name" value="ABC_tran"/>
    <property type="match status" value="1"/>
</dbReference>
<dbReference type="SMART" id="SM00382">
    <property type="entry name" value="AAA"/>
    <property type="match status" value="1"/>
</dbReference>
<dbReference type="SUPFAM" id="SSF52540">
    <property type="entry name" value="P-loop containing nucleoside triphosphate hydrolases"/>
    <property type="match status" value="1"/>
</dbReference>
<dbReference type="PROSITE" id="PS00211">
    <property type="entry name" value="ABC_TRANSPORTER_1"/>
    <property type="match status" value="1"/>
</dbReference>
<dbReference type="PROSITE" id="PS50893">
    <property type="entry name" value="ABC_TRANSPORTER_2"/>
    <property type="match status" value="1"/>
</dbReference>
<accession>O34392</accession>
<evidence type="ECO:0000255" key="1">
    <source>
        <dbReference type="PROSITE-ProRule" id="PRU00434"/>
    </source>
</evidence>
<evidence type="ECO:0000269" key="2">
    <source>
    </source>
</evidence>
<evidence type="ECO:0000305" key="3"/>
<organism>
    <name type="scientific">Bacillus subtilis (strain 168)</name>
    <dbReference type="NCBI Taxonomy" id="224308"/>
    <lineage>
        <taxon>Bacteria</taxon>
        <taxon>Bacillati</taxon>
        <taxon>Bacillota</taxon>
        <taxon>Bacilli</taxon>
        <taxon>Bacillales</taxon>
        <taxon>Bacillaceae</taxon>
        <taxon>Bacillus</taxon>
    </lineage>
</organism>
<proteinExistence type="evidence at transcript level"/>
<name>YTRE_BACSU</name>